<proteinExistence type="evidence at transcript level"/>
<evidence type="ECO:0000255" key="1">
    <source>
        <dbReference type="PROSITE-ProRule" id="PRU00108"/>
    </source>
</evidence>
<evidence type="ECO:0000256" key="2">
    <source>
        <dbReference type="SAM" id="MobiDB-lite"/>
    </source>
</evidence>
<evidence type="ECO:0000305" key="3"/>
<comment type="function">
    <text>Sequence-specific transcription factor which is part of a developmental regulatory system that provides cells with specific positional identities on the anterior-posterior axis.</text>
</comment>
<comment type="subcellular location">
    <subcellularLocation>
        <location>Nucleus</location>
    </subcellularLocation>
</comment>
<comment type="similarity">
    <text evidence="3">Belongs to the Abd-B homeobox family.</text>
</comment>
<reference key="1">
    <citation type="journal article" date="1991" name="Development">
        <title>Identification and expression of a regeneration-specific homeobox gene in the newt limb blastema.</title>
        <authorList>
            <person name="Brown R."/>
            <person name="Brockes J.P."/>
        </authorList>
    </citation>
    <scope>NUCLEOTIDE SEQUENCE [MRNA]</scope>
</reference>
<dbReference type="EMBL" id="X57674">
    <property type="status" value="NOT_ANNOTATED_CDS"/>
    <property type="molecule type" value="mRNA"/>
</dbReference>
<dbReference type="PIR" id="A43783">
    <property type="entry name" value="A43783"/>
</dbReference>
<dbReference type="SMR" id="P31263"/>
<dbReference type="GO" id="GO:0005654">
    <property type="term" value="C:nucleoplasm"/>
    <property type="evidence" value="ECO:0007669"/>
    <property type="project" value="UniProtKB-ARBA"/>
</dbReference>
<dbReference type="GO" id="GO:0000981">
    <property type="term" value="F:DNA-binding transcription factor activity, RNA polymerase II-specific"/>
    <property type="evidence" value="ECO:0007669"/>
    <property type="project" value="InterPro"/>
</dbReference>
<dbReference type="GO" id="GO:0000978">
    <property type="term" value="F:RNA polymerase II cis-regulatory region sequence-specific DNA binding"/>
    <property type="evidence" value="ECO:0007669"/>
    <property type="project" value="TreeGrafter"/>
</dbReference>
<dbReference type="CDD" id="cd00086">
    <property type="entry name" value="homeodomain"/>
    <property type="match status" value="1"/>
</dbReference>
<dbReference type="FunFam" id="1.10.10.60:FF:000166">
    <property type="entry name" value="homeobox protein Hox-C11"/>
    <property type="match status" value="1"/>
</dbReference>
<dbReference type="Gene3D" id="1.10.10.60">
    <property type="entry name" value="Homeodomain-like"/>
    <property type="match status" value="1"/>
</dbReference>
<dbReference type="InterPro" id="IPR021918">
    <property type="entry name" value="DUF3528"/>
</dbReference>
<dbReference type="InterPro" id="IPR001356">
    <property type="entry name" value="HD"/>
</dbReference>
<dbReference type="InterPro" id="IPR020479">
    <property type="entry name" value="HD_metazoa"/>
</dbReference>
<dbReference type="InterPro" id="IPR017970">
    <property type="entry name" value="Homeobox_CS"/>
</dbReference>
<dbReference type="InterPro" id="IPR009057">
    <property type="entry name" value="Homeodomain-like_sf"/>
</dbReference>
<dbReference type="PANTHER" id="PTHR46092">
    <property type="entry name" value="HOMEOBOX PROTEIN HOX-A11-RELATED"/>
    <property type="match status" value="1"/>
</dbReference>
<dbReference type="PANTHER" id="PTHR46092:SF2">
    <property type="entry name" value="HOMEOBOX PROTEIN HOX-D11"/>
    <property type="match status" value="1"/>
</dbReference>
<dbReference type="Pfam" id="PF12045">
    <property type="entry name" value="DUF3528"/>
    <property type="match status" value="1"/>
</dbReference>
<dbReference type="Pfam" id="PF00046">
    <property type="entry name" value="Homeodomain"/>
    <property type="match status" value="1"/>
</dbReference>
<dbReference type="PRINTS" id="PR00024">
    <property type="entry name" value="HOMEOBOX"/>
</dbReference>
<dbReference type="SMART" id="SM00389">
    <property type="entry name" value="HOX"/>
    <property type="match status" value="1"/>
</dbReference>
<dbReference type="SUPFAM" id="SSF46689">
    <property type="entry name" value="Homeodomain-like"/>
    <property type="match status" value="1"/>
</dbReference>
<dbReference type="PROSITE" id="PS00027">
    <property type="entry name" value="HOMEOBOX_1"/>
    <property type="match status" value="1"/>
</dbReference>
<dbReference type="PROSITE" id="PS50071">
    <property type="entry name" value="HOMEOBOX_2"/>
    <property type="match status" value="1"/>
</dbReference>
<name>HXD11_NOTVI</name>
<protein>
    <recommendedName>
        <fullName>Homeobox protein Hox-D11</fullName>
    </recommendedName>
    <alternativeName>
        <fullName>NvHox-2</fullName>
    </alternativeName>
</protein>
<accession>P31263</accession>
<organism>
    <name type="scientific">Notophthalmus viridescens</name>
    <name type="common">Eastern newt</name>
    <name type="synonym">Triturus viridescens</name>
    <dbReference type="NCBI Taxonomy" id="8316"/>
    <lineage>
        <taxon>Eukaryota</taxon>
        <taxon>Metazoa</taxon>
        <taxon>Chordata</taxon>
        <taxon>Craniata</taxon>
        <taxon>Vertebrata</taxon>
        <taxon>Euteleostomi</taxon>
        <taxon>Amphibia</taxon>
        <taxon>Batrachia</taxon>
        <taxon>Caudata</taxon>
        <taxon>Salamandroidea</taxon>
        <taxon>Salamandridae</taxon>
        <taxon>Pleurodelinae</taxon>
        <taxon>Notophthalmus</taxon>
    </lineage>
</organism>
<keyword id="KW-0217">Developmental protein</keyword>
<keyword id="KW-0238">DNA-binding</keyword>
<keyword id="KW-0371">Homeobox</keyword>
<keyword id="KW-0539">Nucleus</keyword>
<keyword id="KW-0804">Transcription</keyword>
<keyword id="KW-0805">Transcription regulation</keyword>
<sequence>MTEFDGCTNGATNMYLPGCAYYVSPSEFSTKTSFLSQGSSCPVTFPYSSNLPHVQPVREMAFREYGWRRSKWQYRGSYPSYYPSEEVVARDFIQPSNRRSDVLFKADPLCAHHGTPSAASNLYSTVGRNGVLPQEFDQFYEASQPTSVPPEHVGSLDKTGSKTQEVPPKITHSPDKKMGAEGRADSPSGEVAADKSNSSATPQRSRKKRCPYTKYQIRELEREFFFNVYINKEKRLQLSRMLNLTDRQVKIWFQNRRMKEKKLNRDRLQYFTGNPLF</sequence>
<gene>
    <name type="primary">HOXD11</name>
    <name type="synonym">NVHOX2</name>
</gene>
<feature type="chain" id="PRO_0000200236" description="Homeobox protein Hox-D11">
    <location>
        <begin position="1"/>
        <end position="277"/>
    </location>
</feature>
<feature type="DNA-binding region" description="Homeobox" evidence="1">
    <location>
        <begin position="205"/>
        <end position="264"/>
    </location>
</feature>
<feature type="region of interest" description="Disordered" evidence="2">
    <location>
        <begin position="143"/>
        <end position="209"/>
    </location>
</feature>
<feature type="compositionally biased region" description="Basic and acidic residues" evidence="2">
    <location>
        <begin position="172"/>
        <end position="184"/>
    </location>
</feature>